<protein>
    <recommendedName>
        <fullName>Myosin-1</fullName>
    </recommendedName>
    <alternativeName>
        <fullName>Class I unconventional myosin</fullName>
    </alternativeName>
    <alternativeName>
        <fullName>Type I myosin</fullName>
    </alternativeName>
</protein>
<accession>A7TDZ8</accession>
<organism>
    <name type="scientific">Vanderwaltozyma polyspora (strain ATCC 22028 / DSM 70294 / BCRC 21397 / CBS 2163 / NBRC 10782 / NRRL Y-8283 / UCD 57-17)</name>
    <name type="common">Kluyveromyces polysporus</name>
    <dbReference type="NCBI Taxonomy" id="436907"/>
    <lineage>
        <taxon>Eukaryota</taxon>
        <taxon>Fungi</taxon>
        <taxon>Dikarya</taxon>
        <taxon>Ascomycota</taxon>
        <taxon>Saccharomycotina</taxon>
        <taxon>Saccharomycetes</taxon>
        <taxon>Saccharomycetales</taxon>
        <taxon>Saccharomycetaceae</taxon>
        <taxon>Vanderwaltozyma</taxon>
    </lineage>
</organism>
<gene>
    <name type="primary">MYO1</name>
    <name type="ORF">Kpol_1018p157</name>
</gene>
<dbReference type="EMBL" id="DS480378">
    <property type="protein sequence ID" value="EDO19618.1"/>
    <property type="molecule type" value="Genomic_DNA"/>
</dbReference>
<dbReference type="RefSeq" id="XP_001647476.1">
    <property type="nucleotide sequence ID" value="XM_001647426.1"/>
</dbReference>
<dbReference type="SMR" id="A7TDZ8"/>
<dbReference type="FunCoup" id="A7TDZ8">
    <property type="interactions" value="325"/>
</dbReference>
<dbReference type="STRING" id="436907.A7TDZ8"/>
<dbReference type="GeneID" id="5547982"/>
<dbReference type="KEGG" id="vpo:Kpol_1018p157"/>
<dbReference type="eggNOG" id="KOG0162">
    <property type="taxonomic scope" value="Eukaryota"/>
</dbReference>
<dbReference type="HOGENOM" id="CLU_000192_7_6_1"/>
<dbReference type="InParanoid" id="A7TDZ8"/>
<dbReference type="OMA" id="NDQENQC"/>
<dbReference type="OrthoDB" id="6108017at2759"/>
<dbReference type="Proteomes" id="UP000000267">
    <property type="component" value="Unassembled WGS sequence"/>
</dbReference>
<dbReference type="GO" id="GO:0030479">
    <property type="term" value="C:actin cortical patch"/>
    <property type="evidence" value="ECO:0007669"/>
    <property type="project" value="UniProtKB-SubCell"/>
</dbReference>
<dbReference type="GO" id="GO:0051285">
    <property type="term" value="C:cell cortex of cell tip"/>
    <property type="evidence" value="ECO:0007669"/>
    <property type="project" value="EnsemblFungi"/>
</dbReference>
<dbReference type="GO" id="GO:0043332">
    <property type="term" value="C:mating projection tip"/>
    <property type="evidence" value="ECO:0007669"/>
    <property type="project" value="EnsemblFungi"/>
</dbReference>
<dbReference type="GO" id="GO:0031097">
    <property type="term" value="C:medial cortex"/>
    <property type="evidence" value="ECO:0007669"/>
    <property type="project" value="EnsemblFungi"/>
</dbReference>
<dbReference type="GO" id="GO:0045160">
    <property type="term" value="C:myosin I complex"/>
    <property type="evidence" value="ECO:0007669"/>
    <property type="project" value="EnsemblFungi"/>
</dbReference>
<dbReference type="GO" id="GO:0044853">
    <property type="term" value="C:plasma membrane raft"/>
    <property type="evidence" value="ECO:0007669"/>
    <property type="project" value="EnsemblFungi"/>
</dbReference>
<dbReference type="GO" id="GO:0005628">
    <property type="term" value="C:prospore membrane"/>
    <property type="evidence" value="ECO:0007669"/>
    <property type="project" value="EnsemblFungi"/>
</dbReference>
<dbReference type="GO" id="GO:0051015">
    <property type="term" value="F:actin filament binding"/>
    <property type="evidence" value="ECO:0007669"/>
    <property type="project" value="EnsemblFungi"/>
</dbReference>
<dbReference type="GO" id="GO:0071933">
    <property type="term" value="F:Arp2/3 complex binding"/>
    <property type="evidence" value="ECO:0007669"/>
    <property type="project" value="EnsemblFungi"/>
</dbReference>
<dbReference type="GO" id="GO:0005524">
    <property type="term" value="F:ATP binding"/>
    <property type="evidence" value="ECO:0007669"/>
    <property type="project" value="UniProtKB-KW"/>
</dbReference>
<dbReference type="GO" id="GO:0016787">
    <property type="term" value="F:hydrolase activity"/>
    <property type="evidence" value="ECO:0007669"/>
    <property type="project" value="UniProtKB-KW"/>
</dbReference>
<dbReference type="GO" id="GO:0000146">
    <property type="term" value="F:microfilament motor activity"/>
    <property type="evidence" value="ECO:0007669"/>
    <property type="project" value="EnsemblFungi"/>
</dbReference>
<dbReference type="GO" id="GO:0000147">
    <property type="term" value="P:actin cortical patch assembly"/>
    <property type="evidence" value="ECO:0007669"/>
    <property type="project" value="EnsemblFungi"/>
</dbReference>
<dbReference type="GO" id="GO:0051666">
    <property type="term" value="P:actin cortical patch localization"/>
    <property type="evidence" value="ECO:0007669"/>
    <property type="project" value="TreeGrafter"/>
</dbReference>
<dbReference type="GO" id="GO:0007015">
    <property type="term" value="P:actin filament organization"/>
    <property type="evidence" value="ECO:0007669"/>
    <property type="project" value="TreeGrafter"/>
</dbReference>
<dbReference type="GO" id="GO:0006897">
    <property type="term" value="P:endocytosis"/>
    <property type="evidence" value="ECO:0007669"/>
    <property type="project" value="EnsemblFungi"/>
</dbReference>
<dbReference type="GO" id="GO:0000281">
    <property type="term" value="P:mitotic cytokinesis"/>
    <property type="evidence" value="ECO:0007669"/>
    <property type="project" value="EnsemblFungi"/>
</dbReference>
<dbReference type="CDD" id="cd01378">
    <property type="entry name" value="MYSc_Myo1"/>
    <property type="match status" value="1"/>
</dbReference>
<dbReference type="CDD" id="cd11858">
    <property type="entry name" value="SH3_Myosin-I_fungi"/>
    <property type="match status" value="1"/>
</dbReference>
<dbReference type="FunFam" id="1.10.10.820:FF:000001">
    <property type="entry name" value="Myosin heavy chain"/>
    <property type="match status" value="1"/>
</dbReference>
<dbReference type="FunFam" id="1.20.120.720:FF:000015">
    <property type="entry name" value="Myosin I"/>
    <property type="match status" value="1"/>
</dbReference>
<dbReference type="FunFam" id="1.20.5.4820:FF:000004">
    <property type="entry name" value="Myosin IE"/>
    <property type="match status" value="1"/>
</dbReference>
<dbReference type="FunFam" id="1.20.58.530:FF:000007">
    <property type="entry name" value="Myosin IE"/>
    <property type="match status" value="1"/>
</dbReference>
<dbReference type="Gene3D" id="1.10.10.820">
    <property type="match status" value="1"/>
</dbReference>
<dbReference type="Gene3D" id="1.20.5.4820">
    <property type="match status" value="1"/>
</dbReference>
<dbReference type="Gene3D" id="1.20.58.530">
    <property type="match status" value="1"/>
</dbReference>
<dbReference type="Gene3D" id="3.40.850.10">
    <property type="entry name" value="Kinesin motor domain"/>
    <property type="match status" value="1"/>
</dbReference>
<dbReference type="Gene3D" id="1.20.120.720">
    <property type="entry name" value="Myosin VI head, motor domain, U50 subdomain"/>
    <property type="match status" value="1"/>
</dbReference>
<dbReference type="Gene3D" id="2.30.30.40">
    <property type="entry name" value="SH3 Domains"/>
    <property type="match status" value="1"/>
</dbReference>
<dbReference type="InterPro" id="IPR035535">
    <property type="entry name" value="Fungal_myosin-I_SH3"/>
</dbReference>
<dbReference type="InterPro" id="IPR036961">
    <property type="entry name" value="Kinesin_motor_dom_sf"/>
</dbReference>
<dbReference type="InterPro" id="IPR001609">
    <property type="entry name" value="Myosin_head_motor_dom-like"/>
</dbReference>
<dbReference type="InterPro" id="IPR010926">
    <property type="entry name" value="Myosin_TH1"/>
</dbReference>
<dbReference type="InterPro" id="IPR036072">
    <property type="entry name" value="MYSc_Myo1"/>
</dbReference>
<dbReference type="InterPro" id="IPR027417">
    <property type="entry name" value="P-loop_NTPase"/>
</dbReference>
<dbReference type="InterPro" id="IPR036028">
    <property type="entry name" value="SH3-like_dom_sf"/>
</dbReference>
<dbReference type="InterPro" id="IPR001452">
    <property type="entry name" value="SH3_domain"/>
</dbReference>
<dbReference type="PANTHER" id="PTHR13140">
    <property type="entry name" value="MYOSIN"/>
    <property type="match status" value="1"/>
</dbReference>
<dbReference type="PANTHER" id="PTHR13140:SF837">
    <property type="entry name" value="MYOSIN-3-RELATED"/>
    <property type="match status" value="1"/>
</dbReference>
<dbReference type="Pfam" id="PF00063">
    <property type="entry name" value="Myosin_head"/>
    <property type="match status" value="1"/>
</dbReference>
<dbReference type="Pfam" id="PF06017">
    <property type="entry name" value="Myosin_TH1"/>
    <property type="match status" value="1"/>
</dbReference>
<dbReference type="Pfam" id="PF00018">
    <property type="entry name" value="SH3_1"/>
    <property type="match status" value="1"/>
</dbReference>
<dbReference type="PRINTS" id="PR00193">
    <property type="entry name" value="MYOSINHEAVY"/>
</dbReference>
<dbReference type="SMART" id="SM00242">
    <property type="entry name" value="MYSc"/>
    <property type="match status" value="1"/>
</dbReference>
<dbReference type="SMART" id="SM00326">
    <property type="entry name" value="SH3"/>
    <property type="match status" value="1"/>
</dbReference>
<dbReference type="SUPFAM" id="SSF52540">
    <property type="entry name" value="P-loop containing nucleoside triphosphate hydrolases"/>
    <property type="match status" value="1"/>
</dbReference>
<dbReference type="SUPFAM" id="SSF50044">
    <property type="entry name" value="SH3-domain"/>
    <property type="match status" value="1"/>
</dbReference>
<dbReference type="PROSITE" id="PS51456">
    <property type="entry name" value="MYOSIN_MOTOR"/>
    <property type="match status" value="1"/>
</dbReference>
<dbReference type="PROSITE" id="PS50002">
    <property type="entry name" value="SH3"/>
    <property type="match status" value="1"/>
</dbReference>
<dbReference type="PROSITE" id="PS51757">
    <property type="entry name" value="TH1"/>
    <property type="match status" value="1"/>
</dbReference>
<reference key="1">
    <citation type="journal article" date="2007" name="Proc. Natl. Acad. Sci. U.S.A.">
        <title>Independent sorting-out of thousands of duplicated gene pairs in two yeast species descended from a whole-genome duplication.</title>
        <authorList>
            <person name="Scannell D.R."/>
            <person name="Frank A.C."/>
            <person name="Conant G.C."/>
            <person name="Byrne K.P."/>
            <person name="Woolfit M."/>
            <person name="Wolfe K.H."/>
        </authorList>
    </citation>
    <scope>NUCLEOTIDE SEQUENCE [LARGE SCALE GENOMIC DNA]</scope>
    <source>
        <strain>ATCC 22028 / DSM 70294 / BCRC 21397 / CBS 2163 / NBRC 10782 / NRRL Y-8283 / UCD 57-17</strain>
    </source>
</reference>
<feature type="chain" id="PRO_0000338563" description="Myosin-1">
    <location>
        <begin position="1"/>
        <end position="1214"/>
    </location>
</feature>
<feature type="domain" description="Myosin motor" evidence="4">
    <location>
        <begin position="36"/>
        <end position="715"/>
    </location>
</feature>
<feature type="domain" description="IQ 1">
    <location>
        <begin position="719"/>
        <end position="739"/>
    </location>
</feature>
<feature type="domain" description="IQ 2">
    <location>
        <begin position="740"/>
        <end position="765"/>
    </location>
</feature>
<feature type="domain" description="TH1" evidence="5">
    <location>
        <begin position="771"/>
        <end position="961"/>
    </location>
</feature>
<feature type="domain" description="SH3" evidence="3">
    <location>
        <begin position="1069"/>
        <end position="1131"/>
    </location>
</feature>
<feature type="region of interest" description="Disordered" evidence="6">
    <location>
        <begin position="1"/>
        <end position="21"/>
    </location>
</feature>
<feature type="region of interest" description="Actin-binding" evidence="1">
    <location>
        <begin position="404"/>
        <end position="486"/>
    </location>
</feature>
<feature type="region of interest" description="Disordered" evidence="6">
    <location>
        <begin position="926"/>
        <end position="1090"/>
    </location>
</feature>
<feature type="region of interest" description="Disordered" evidence="6">
    <location>
        <begin position="1129"/>
        <end position="1177"/>
    </location>
</feature>
<feature type="region of interest" description="Disordered" evidence="6">
    <location>
        <begin position="1193"/>
        <end position="1214"/>
    </location>
</feature>
<feature type="compositionally biased region" description="Basic residues" evidence="6">
    <location>
        <begin position="965"/>
        <end position="980"/>
    </location>
</feature>
<feature type="compositionally biased region" description="Low complexity" evidence="6">
    <location>
        <begin position="981"/>
        <end position="1000"/>
    </location>
</feature>
<feature type="compositionally biased region" description="Low complexity" evidence="6">
    <location>
        <begin position="1037"/>
        <end position="1057"/>
    </location>
</feature>
<feature type="compositionally biased region" description="Pro residues" evidence="6">
    <location>
        <begin position="1058"/>
        <end position="1067"/>
    </location>
</feature>
<feature type="compositionally biased region" description="Low complexity" evidence="6">
    <location>
        <begin position="1157"/>
        <end position="1177"/>
    </location>
</feature>
<feature type="compositionally biased region" description="Acidic residues" evidence="6">
    <location>
        <begin position="1200"/>
        <end position="1214"/>
    </location>
</feature>
<feature type="binding site" evidence="2">
    <location>
        <begin position="129"/>
        <end position="136"/>
    </location>
    <ligand>
        <name>ATP</name>
        <dbReference type="ChEBI" id="CHEBI:30616"/>
    </ligand>
</feature>
<feature type="modified residue" description="Phosphoserine" evidence="1">
    <location>
        <position position="357"/>
    </location>
</feature>
<keyword id="KW-0009">Actin-binding</keyword>
<keyword id="KW-0067">ATP-binding</keyword>
<keyword id="KW-0963">Cytoplasm</keyword>
<keyword id="KW-0206">Cytoskeleton</keyword>
<keyword id="KW-0378">Hydrolase</keyword>
<keyword id="KW-0505">Motor protein</keyword>
<keyword id="KW-0518">Myosin</keyword>
<keyword id="KW-0547">Nucleotide-binding</keyword>
<keyword id="KW-0597">Phosphoprotein</keyword>
<keyword id="KW-1185">Reference proteome</keyword>
<keyword id="KW-0677">Repeat</keyword>
<keyword id="KW-0728">SH3 domain</keyword>
<sequence length="1214" mass="135786">MAIIKRGARNKTAQEPAKRSAKIKKATYDSGKKKEVGVSDLTLLSTISDEAINENLKKRFTNGTIYTYIGHVLISVNPFRDLGIYTDAVLESYKGKNRLEVPPHVFAIAESMYYNLKAYNENQCVIISGESGAGKTEAAKRIMQYIASASESNSESIGKIKDMVLATNPLLESFGCAKTLRNNNSSRHGKYLEIRFNNQFEPCAGNITNYLLEKQRVVSQIKEERNFHIFYQFTKGASENYRQTFGVQKPEQYIYTSAAGCTSVDTIDDVKDYEDTLKAMQVIGLSQDEQDQIFRMLSSILWVGNISFVENEEGNAQVRDTSVTDFVAYLLQIDSQVLMKALVERTMETSHGMRRGSVYHVPLNIVQATAVRDALAKAIYNNMFDWIVERVNISLQAYPGADKSIGILDIYGFEIFEHNSFEQICINYVNEKLQQIFIQLTLKSEQETYEREQIQWTPIKFFDNKIVCDLIESRRPPGIFAAMNDSVATAHADSDAADQAFSQRLNLFSTNPHFALRSNKFVIKHYAGDVTYDVNGITDKNKDQLQRDLVELIATSSNAFLRTIFPDNVDKDSKRRPPTAGDKIIKSANELVETLSKAQPSYIRTIKPNQTKSPNDYDDQQVLHQVKYLGLKENVRIRRAGFAYRQVFDKFVERFYLLSPSCSYAGDYTWQGETLEAVKLILKEASIPEKEYQVGVSQVFIKTPETLFALEHMRDKYWYNMAARIQRAWRRFLQRRIDSATRIQRAIREKKGGNKYEKLRDEGSKILAARKERRTMSLLGFRAFMGDYLLCNERKSRGAYIKKQAGISDKVVFSIKGEQLQSKFGRSSVRVKKVLILTHSHLYIIGQSMVQNSVQYTTEYKIDVNKIAGVSMTNLQDDWVAINLSNSTQPDPLLHTFFKTELVTQLKKLNGRIQVKIGTVIEYQKKPGKMHKVKSQVSEATPKYNDNYKSGTILVRRGHPANSPQKKKPKKGKGHSKHHSTSTSAPRSSVQSSQPSAPVSRKTKKPAPPPPGSKKLSSSVAQTASRPQPVANSARGAAQPQATPQPAQVTQPQQKKVAPPPPPPPPMQSSEPKYEAAYDFPGSGSPSELPLKKGEVVYITREEPSGWSLAKTLDGSREGWVPTNYVVKHQGGSVPPPPPAPAAVQATQAANVTSTPVSSSQSETATTATPASVAAAQPNFSDGLASALAARANKMRVESDGEDNGNDDDDDDDW</sequence>
<name>MYO1_VANPO</name>
<comment type="function">
    <text evidence="1">Type-I myosin implicated in the organization of the actin cytoskeleton. Required for proper actin cytoskeleton polarization. At the cell cortex, assembles in patch-like structures together with proteins from the actin-polymerizing machinery and promotes actin assembly. Functions as actin nucleation-promoting factor (NPF) for the Arp2/3 complex (By similarity).</text>
</comment>
<comment type="subcellular location">
    <subcellularLocation>
        <location evidence="1">Cytoplasm</location>
        <location evidence="1">Cytoskeleton</location>
        <location evidence="1">Actin patch</location>
    </subcellularLocation>
</comment>
<comment type="domain">
    <text evidence="1">The myosin motor domain displays actin-stimulated ATPase activity and generates a mechanochemical force.</text>
</comment>
<comment type="domain">
    <text evidence="1">The tail domain participates in molecular interactions that specify the role of the motor domain (By similarity). It is composed of several tail homology (TH) domains, namely a putative phospholipid-binding myosin tail domain (also named TH1), an Ala- and Pro-rich domain (TH2), followed by an SH3 domain and a C-terminal acidic domain (TH3).</text>
</comment>
<comment type="PTM">
    <text evidence="1">Phosphorylation of the TEDS site (Ser-357) is required for the polarization of the actin cytoskeleton. Phosphorylation probably activates the myosin-I ATPase activity (By similarity).</text>
</comment>
<comment type="similarity">
    <text evidence="7">Belongs to the TRAFAC class myosin-kinesin ATPase superfamily. Myosin family.</text>
</comment>
<proteinExistence type="inferred from homology"/>
<evidence type="ECO:0000250" key="1"/>
<evidence type="ECO:0000255" key="2"/>
<evidence type="ECO:0000255" key="3">
    <source>
        <dbReference type="PROSITE-ProRule" id="PRU00192"/>
    </source>
</evidence>
<evidence type="ECO:0000255" key="4">
    <source>
        <dbReference type="PROSITE-ProRule" id="PRU00782"/>
    </source>
</evidence>
<evidence type="ECO:0000255" key="5">
    <source>
        <dbReference type="PROSITE-ProRule" id="PRU01093"/>
    </source>
</evidence>
<evidence type="ECO:0000256" key="6">
    <source>
        <dbReference type="SAM" id="MobiDB-lite"/>
    </source>
</evidence>
<evidence type="ECO:0000305" key="7"/>